<organism>
    <name type="scientific">Sulfurisphaera tokodaii (strain DSM 16993 / JCM 10545 / NBRC 100140 / 7)</name>
    <name type="common">Sulfolobus tokodaii</name>
    <dbReference type="NCBI Taxonomy" id="273063"/>
    <lineage>
        <taxon>Archaea</taxon>
        <taxon>Thermoproteota</taxon>
        <taxon>Thermoprotei</taxon>
        <taxon>Sulfolobales</taxon>
        <taxon>Sulfolobaceae</taxon>
        <taxon>Sulfurisphaera</taxon>
    </lineage>
</organism>
<comment type="function">
    <text evidence="1">Stabilizes TBP binding to an archaeal box-A promoter. Also responsible for recruiting RNA polymerase II to the pre-initiation complex (DNA-TBP-TFIIB).</text>
</comment>
<comment type="similarity">
    <text evidence="1">Belongs to the TFIIB family.</text>
</comment>
<protein>
    <recommendedName>
        <fullName evidence="1">Transcription initiation factor IIB</fullName>
        <shortName evidence="1">TFIIB</shortName>
    </recommendedName>
</protein>
<reference key="1">
    <citation type="journal article" date="2001" name="DNA Res.">
        <title>Complete genome sequence of an aerobic thermoacidophilic Crenarchaeon, Sulfolobus tokodaii strain7.</title>
        <authorList>
            <person name="Kawarabayasi Y."/>
            <person name="Hino Y."/>
            <person name="Horikawa H."/>
            <person name="Jin-no K."/>
            <person name="Takahashi M."/>
            <person name="Sekine M."/>
            <person name="Baba S."/>
            <person name="Ankai A."/>
            <person name="Kosugi H."/>
            <person name="Hosoyama A."/>
            <person name="Fukui S."/>
            <person name="Nagai Y."/>
            <person name="Nishijima K."/>
            <person name="Otsuka R."/>
            <person name="Nakazawa H."/>
            <person name="Takamiya M."/>
            <person name="Kato Y."/>
            <person name="Yoshizawa T."/>
            <person name="Tanaka T."/>
            <person name="Kudoh Y."/>
            <person name="Yamazaki J."/>
            <person name="Kushida N."/>
            <person name="Oguchi A."/>
            <person name="Aoki K."/>
            <person name="Masuda S."/>
            <person name="Yanagii M."/>
            <person name="Nishimura M."/>
            <person name="Yamagishi A."/>
            <person name="Oshima T."/>
            <person name="Kikuchi H."/>
        </authorList>
    </citation>
    <scope>NUCLEOTIDE SEQUENCE [LARGE SCALE GENOMIC DNA]</scope>
    <source>
        <strain>DSM 16993 / JCM 10545 / NBRC 100140 / 7</strain>
    </source>
</reference>
<feature type="chain" id="PRO_0000119337" description="Transcription initiation factor IIB">
    <location>
        <begin position="1"/>
        <end position="308"/>
    </location>
</feature>
<feature type="repeat" description="1">
    <location>
        <begin position="124"/>
        <end position="207"/>
    </location>
</feature>
<feature type="repeat" description="2">
    <location>
        <begin position="218"/>
        <end position="299"/>
    </location>
</feature>
<proteinExistence type="inferred from homology"/>
<evidence type="ECO:0000255" key="1">
    <source>
        <dbReference type="HAMAP-Rule" id="MF_00383"/>
    </source>
</evidence>
<keyword id="KW-1185">Reference proteome</keyword>
<keyword id="KW-0677">Repeat</keyword>
<keyword id="KW-0804">Transcription</keyword>
<keyword id="KW-0805">Transcription regulation</keyword>
<gene>
    <name evidence="1" type="primary">tfb</name>
    <name type="ordered locus">STK_03490</name>
</gene>
<sequence length="308" mass="34665">MSESNKSQASATPCPPDKIVFDEERGEYICTETGEVIEERAIDQGPEWRAFTPEEKEKRSRVGGPLNQTIHDMGISTVIDWKDKDAMGRTLDPKRRLEVLRWRKWQIRARIQSSIDRNLAQAMNELERIGNLLNLPKAVKDEAALIYRKAVEKGLVRGRSIESVVAASIYAACRRMKMARTLDEIAQFTKANRKEVARCYRLILRELDINVPVSDPKDYVTRIGSLLGLSGSTMKMAIDIIEKAKESGLTAGKDPAGLAAAAIYIAALLNDERRTQKEIAQIAGVTEVTVRNRYKELTQELKIQIPNQ</sequence>
<name>TF2B_SULTO</name>
<dbReference type="EMBL" id="BA000023">
    <property type="protein sequence ID" value="BAB65329.1"/>
    <property type="molecule type" value="Genomic_DNA"/>
</dbReference>
<dbReference type="RefSeq" id="WP_010978312.1">
    <property type="nucleotide sequence ID" value="NC_003106.2"/>
</dbReference>
<dbReference type="SMR" id="Q975S1"/>
<dbReference type="STRING" id="273063.STK_03490"/>
<dbReference type="KEGG" id="sto:STK_03490"/>
<dbReference type="PATRIC" id="fig|273063.9.peg.408"/>
<dbReference type="eggNOG" id="arCOG01981">
    <property type="taxonomic scope" value="Archaea"/>
</dbReference>
<dbReference type="OrthoDB" id="7429at2157"/>
<dbReference type="Proteomes" id="UP000001015">
    <property type="component" value="Chromosome"/>
</dbReference>
<dbReference type="GO" id="GO:0097550">
    <property type="term" value="C:transcription preinitiation complex"/>
    <property type="evidence" value="ECO:0007669"/>
    <property type="project" value="TreeGrafter"/>
</dbReference>
<dbReference type="GO" id="GO:0003700">
    <property type="term" value="F:DNA-binding transcription factor activity"/>
    <property type="evidence" value="ECO:0007669"/>
    <property type="project" value="UniProtKB-UniRule"/>
</dbReference>
<dbReference type="GO" id="GO:0017025">
    <property type="term" value="F:TBP-class protein binding"/>
    <property type="evidence" value="ECO:0007669"/>
    <property type="project" value="InterPro"/>
</dbReference>
<dbReference type="GO" id="GO:0070897">
    <property type="term" value="P:transcription preinitiation complex assembly"/>
    <property type="evidence" value="ECO:0007669"/>
    <property type="project" value="InterPro"/>
</dbReference>
<dbReference type="CDD" id="cd20549">
    <property type="entry name" value="CYCLIN_TFIIB_archaea_like_rpt1"/>
    <property type="match status" value="1"/>
</dbReference>
<dbReference type="CDD" id="cd20550">
    <property type="entry name" value="CYCLIN_TFIIB_archaea_like_rpt2"/>
    <property type="match status" value="1"/>
</dbReference>
<dbReference type="FunFam" id="1.10.472.10:FF:000023">
    <property type="entry name" value="Transcription initiation factor IIB"/>
    <property type="match status" value="1"/>
</dbReference>
<dbReference type="FunFam" id="1.10.472.170:FF:000001">
    <property type="entry name" value="Transcription initiation factor IIB"/>
    <property type="match status" value="1"/>
</dbReference>
<dbReference type="Gene3D" id="1.10.472.170">
    <property type="match status" value="1"/>
</dbReference>
<dbReference type="Gene3D" id="1.10.472.10">
    <property type="entry name" value="Cyclin-like"/>
    <property type="match status" value="1"/>
</dbReference>
<dbReference type="HAMAP" id="MF_00383">
    <property type="entry name" value="TF2B_arch"/>
    <property type="match status" value="1"/>
</dbReference>
<dbReference type="InterPro" id="IPR013763">
    <property type="entry name" value="Cyclin-like_dom"/>
</dbReference>
<dbReference type="InterPro" id="IPR036915">
    <property type="entry name" value="Cyclin-like_sf"/>
</dbReference>
<dbReference type="InterPro" id="IPR000812">
    <property type="entry name" value="TFIIB"/>
</dbReference>
<dbReference type="InterPro" id="IPR023484">
    <property type="entry name" value="TFIIB_arc"/>
</dbReference>
<dbReference type="InterPro" id="IPR023486">
    <property type="entry name" value="TFIIB_CS"/>
</dbReference>
<dbReference type="InterPro" id="IPR013150">
    <property type="entry name" value="TFIIB_cyclin"/>
</dbReference>
<dbReference type="InterPro" id="IPR013137">
    <property type="entry name" value="Znf_TFIIB"/>
</dbReference>
<dbReference type="NCBIfam" id="NF001658">
    <property type="entry name" value="PRK00423.1"/>
    <property type="match status" value="1"/>
</dbReference>
<dbReference type="PANTHER" id="PTHR11618:SF13">
    <property type="entry name" value="TRANSCRIPTION INITIATION FACTOR IIB"/>
    <property type="match status" value="1"/>
</dbReference>
<dbReference type="PANTHER" id="PTHR11618">
    <property type="entry name" value="TRANSCRIPTION INITIATION FACTOR IIB-RELATED"/>
    <property type="match status" value="1"/>
</dbReference>
<dbReference type="Pfam" id="PF00382">
    <property type="entry name" value="TFIIB"/>
    <property type="match status" value="2"/>
</dbReference>
<dbReference type="Pfam" id="PF08271">
    <property type="entry name" value="Zn_Ribbon_TF"/>
    <property type="match status" value="1"/>
</dbReference>
<dbReference type="PRINTS" id="PR00685">
    <property type="entry name" value="TIFACTORIIB"/>
</dbReference>
<dbReference type="SMART" id="SM00385">
    <property type="entry name" value="CYCLIN"/>
    <property type="match status" value="2"/>
</dbReference>
<dbReference type="SUPFAM" id="SSF47954">
    <property type="entry name" value="Cyclin-like"/>
    <property type="match status" value="2"/>
</dbReference>
<dbReference type="SUPFAM" id="SSF57783">
    <property type="entry name" value="Zinc beta-ribbon"/>
    <property type="match status" value="1"/>
</dbReference>
<dbReference type="PROSITE" id="PS00782">
    <property type="entry name" value="TFIIB"/>
    <property type="match status" value="2"/>
</dbReference>
<accession>Q975S1</accession>